<sequence length="595" mass="65709">MSIPQSKSSSNGFPLKRGETEEVLHKTNTSNTVFNGEAGSLKRLSLDRLVYFTTCKIGHHVEVHLRNGSVYTGIFHAANVEKDFGIILKMACLIKDGTLRGHKSRSEFVRKPPSKTFIIPADELVQVIAKDLSVSSNNMSNAVQGEKPSELLTDSSISQSYHVDRERQLQRWVPDETIPHGADLENVFDNPWNRKWNQFEVNKSLFGVKSTFDEDLYTTRLERGPQTKQLEEHAQKIAREIEAETTRDIHVAEERGLQLNENFDFDEEARYSSVRPVTGFGDSGFDLEDNALLDTCNDLTFGGSSTSDGQKPASSGKGCEELRVSGDSQSSRKNKNVDQSCSTSKQQSKDFPAAGSNISESQLDEQRRKNNEEVSHNNRSAEESTSGHGDIKEGAKSGGGASSVSKAVTEREREASQVSSKTKSESSFGQSASRSSESRPGPSTSSRPGLSPSSSIGSMASSEKSTLNPNAKEFKLNPKAKSFKPLQSAAAPPQSPIADASFYYPGPSHVPVQQMPGMPPVNYGLPPYPGNQPQMMYHPQAYYHPNGQPQYPQQQMIPGQQQQQMIPGQQHPRPVYYMHPPPYPQDMPYHNKGRE</sequence>
<proteinExistence type="evidence at transcript level"/>
<comment type="alternative products">
    <event type="alternative splicing"/>
    <isoform>
        <id>Q94AM9-1</id>
        <name>1</name>
        <sequence type="displayed"/>
    </isoform>
    <text>A number of isoforms are produced. According to EST sequences.</text>
</comment>
<comment type="tissue specificity">
    <text evidence="3">Expressed in cauline leaves, stems, rosette leaves, immature siliques and primary inflorescences.</text>
</comment>
<comment type="domain">
    <text>Contains a tandem repeat of a PAM2-like motif, which seems to be involved in the binding to the PABC/CTC domain of PAB proteins.</text>
</comment>
<comment type="sequence caution" evidence="4">
    <conflict type="erroneous gene model prediction">
        <sequence resource="EMBL-CDS" id="BAB02332"/>
    </conflict>
</comment>
<dbReference type="EMBL" id="AB019229">
    <property type="protein sequence ID" value="BAB02332.1"/>
    <property type="status" value="ALT_SEQ"/>
    <property type="molecule type" value="Genomic_DNA"/>
</dbReference>
<dbReference type="EMBL" id="CP002686">
    <property type="protein sequence ID" value="AEE75452.1"/>
    <property type="molecule type" value="Genomic_DNA"/>
</dbReference>
<dbReference type="EMBL" id="CP002686">
    <property type="protein sequence ID" value="AEE75453.1"/>
    <property type="molecule type" value="Genomic_DNA"/>
</dbReference>
<dbReference type="EMBL" id="CP002686">
    <property type="protein sequence ID" value="AEE75454.1"/>
    <property type="molecule type" value="Genomic_DNA"/>
</dbReference>
<dbReference type="EMBL" id="AY045922">
    <property type="protein sequence ID" value="AAK76596.1"/>
    <property type="molecule type" value="mRNA"/>
</dbReference>
<dbReference type="EMBL" id="AY079365">
    <property type="protein sequence ID" value="AAL85096.1"/>
    <property type="molecule type" value="mRNA"/>
</dbReference>
<dbReference type="RefSeq" id="NP_001078150.1">
    <molecule id="Q94AM9-1"/>
    <property type="nucleotide sequence ID" value="NM_001084681.1"/>
</dbReference>
<dbReference type="RefSeq" id="NP_001078151.1">
    <molecule id="Q94AM9-1"/>
    <property type="nucleotide sequence ID" value="NM_001084682.1"/>
</dbReference>
<dbReference type="RefSeq" id="NP_566471.1">
    <molecule id="Q94AM9-1"/>
    <property type="nucleotide sequence ID" value="NM_112255.4"/>
</dbReference>
<dbReference type="SMR" id="Q94AM9"/>
<dbReference type="BioGRID" id="5949">
    <property type="interactions" value="5"/>
</dbReference>
<dbReference type="FunCoup" id="Q94AM9">
    <property type="interactions" value="2434"/>
</dbReference>
<dbReference type="IntAct" id="Q94AM9">
    <property type="interactions" value="4"/>
</dbReference>
<dbReference type="STRING" id="3702.Q94AM9"/>
<dbReference type="iPTMnet" id="Q94AM9"/>
<dbReference type="PaxDb" id="3702-AT3G14010.1"/>
<dbReference type="ProteomicsDB" id="246845">
    <molecule id="Q94AM9-1"/>
</dbReference>
<dbReference type="EnsemblPlants" id="AT3G14010.1">
    <molecule id="Q94AM9-1"/>
    <property type="protein sequence ID" value="AT3G14010.1"/>
    <property type="gene ID" value="AT3G14010"/>
</dbReference>
<dbReference type="EnsemblPlants" id="AT3G14010.2">
    <molecule id="Q94AM9-1"/>
    <property type="protein sequence ID" value="AT3G14010.2"/>
    <property type="gene ID" value="AT3G14010"/>
</dbReference>
<dbReference type="EnsemblPlants" id="AT3G14010.3">
    <molecule id="Q94AM9-1"/>
    <property type="protein sequence ID" value="AT3G14010.3"/>
    <property type="gene ID" value="AT3G14010"/>
</dbReference>
<dbReference type="GeneID" id="820615"/>
<dbReference type="Gramene" id="AT3G14010.1">
    <molecule id="Q94AM9-1"/>
    <property type="protein sequence ID" value="AT3G14010.1"/>
    <property type="gene ID" value="AT3G14010"/>
</dbReference>
<dbReference type="Gramene" id="AT3G14010.2">
    <molecule id="Q94AM9-1"/>
    <property type="protein sequence ID" value="AT3G14010.2"/>
    <property type="gene ID" value="AT3G14010"/>
</dbReference>
<dbReference type="Gramene" id="AT3G14010.3">
    <molecule id="Q94AM9-1"/>
    <property type="protein sequence ID" value="AT3G14010.3"/>
    <property type="gene ID" value="AT3G14010"/>
</dbReference>
<dbReference type="KEGG" id="ath:AT3G14010"/>
<dbReference type="Araport" id="AT3G14010"/>
<dbReference type="TAIR" id="AT3G14010">
    <property type="gene designation" value="CID4"/>
</dbReference>
<dbReference type="eggNOG" id="KOG2375">
    <property type="taxonomic scope" value="Eukaryota"/>
</dbReference>
<dbReference type="HOGENOM" id="CLU_022637_0_0_1"/>
<dbReference type="InParanoid" id="Q94AM9"/>
<dbReference type="PhylomeDB" id="Q94AM9"/>
<dbReference type="PRO" id="PR:Q94AM9"/>
<dbReference type="Proteomes" id="UP000006548">
    <property type="component" value="Chromosome 3"/>
</dbReference>
<dbReference type="ExpressionAtlas" id="Q94AM9">
    <property type="expression patterns" value="baseline and differential"/>
</dbReference>
<dbReference type="GO" id="GO:0003729">
    <property type="term" value="F:mRNA binding"/>
    <property type="evidence" value="ECO:0000314"/>
    <property type="project" value="TAIR"/>
</dbReference>
<dbReference type="InterPro" id="IPR045117">
    <property type="entry name" value="ATXN2-like"/>
</dbReference>
<dbReference type="InterPro" id="IPR009604">
    <property type="entry name" value="LsmAD_domain"/>
</dbReference>
<dbReference type="InterPro" id="IPR009818">
    <property type="entry name" value="PAM2_motif"/>
</dbReference>
<dbReference type="InterPro" id="IPR047575">
    <property type="entry name" value="Sm"/>
</dbReference>
<dbReference type="InterPro" id="IPR025852">
    <property type="entry name" value="SM_dom_ATX"/>
</dbReference>
<dbReference type="PANTHER" id="PTHR12854">
    <property type="entry name" value="ATAXIN 2-RELATED"/>
    <property type="match status" value="1"/>
</dbReference>
<dbReference type="PANTHER" id="PTHR12854:SF15">
    <property type="entry name" value="POLYADENYLATE-BINDING PROTEIN-INTERACTING PROTEIN 4"/>
    <property type="match status" value="1"/>
</dbReference>
<dbReference type="Pfam" id="PF06741">
    <property type="entry name" value="LsmAD"/>
    <property type="match status" value="1"/>
</dbReference>
<dbReference type="Pfam" id="PF07145">
    <property type="entry name" value="PAM2"/>
    <property type="match status" value="1"/>
</dbReference>
<dbReference type="Pfam" id="PF14438">
    <property type="entry name" value="SM-ATX"/>
    <property type="match status" value="1"/>
</dbReference>
<dbReference type="SMART" id="SM01272">
    <property type="entry name" value="LsmAD"/>
    <property type="match status" value="1"/>
</dbReference>
<dbReference type="PROSITE" id="PS52002">
    <property type="entry name" value="SM"/>
    <property type="match status" value="1"/>
</dbReference>
<organism>
    <name type="scientific">Arabidopsis thaliana</name>
    <name type="common">Mouse-ear cress</name>
    <dbReference type="NCBI Taxonomy" id="3702"/>
    <lineage>
        <taxon>Eukaryota</taxon>
        <taxon>Viridiplantae</taxon>
        <taxon>Streptophyta</taxon>
        <taxon>Embryophyta</taxon>
        <taxon>Tracheophyta</taxon>
        <taxon>Spermatophyta</taxon>
        <taxon>Magnoliopsida</taxon>
        <taxon>eudicotyledons</taxon>
        <taxon>Gunneridae</taxon>
        <taxon>Pentapetalae</taxon>
        <taxon>rosids</taxon>
        <taxon>malvids</taxon>
        <taxon>Brassicales</taxon>
        <taxon>Brassicaceae</taxon>
        <taxon>Camelineae</taxon>
        <taxon>Arabidopsis</taxon>
    </lineage>
</organism>
<feature type="chain" id="PRO_0000428895" description="Polyadenylate-binding protein-interacting protein 4">
    <location>
        <begin position="1"/>
        <end position="595"/>
    </location>
</feature>
<feature type="domain" description="Sm" evidence="1">
    <location>
        <begin position="48"/>
        <end position="113"/>
    </location>
</feature>
<feature type="region of interest" description="Disordered" evidence="2">
    <location>
        <begin position="302"/>
        <end position="505"/>
    </location>
</feature>
<feature type="region of interest" description="Disordered" evidence="2">
    <location>
        <begin position="536"/>
        <end position="595"/>
    </location>
</feature>
<feature type="short sequence motif" description="PAM2-like 1; degenerate">
    <location>
        <begin position="466"/>
        <end position="474"/>
    </location>
</feature>
<feature type="short sequence motif" description="PAM2-like 2">
    <location>
        <begin position="475"/>
        <end position="485"/>
    </location>
</feature>
<feature type="compositionally biased region" description="Polar residues" evidence="2">
    <location>
        <begin position="302"/>
        <end position="313"/>
    </location>
</feature>
<feature type="compositionally biased region" description="Polar residues" evidence="2">
    <location>
        <begin position="326"/>
        <end position="346"/>
    </location>
</feature>
<feature type="compositionally biased region" description="Basic and acidic residues" evidence="2">
    <location>
        <begin position="364"/>
        <end position="382"/>
    </location>
</feature>
<feature type="compositionally biased region" description="Low complexity" evidence="2">
    <location>
        <begin position="416"/>
        <end position="465"/>
    </location>
</feature>
<feature type="compositionally biased region" description="Low complexity" evidence="2">
    <location>
        <begin position="488"/>
        <end position="501"/>
    </location>
</feature>
<feature type="compositionally biased region" description="Low complexity" evidence="2">
    <location>
        <begin position="548"/>
        <end position="570"/>
    </location>
</feature>
<accession>Q94AM9</accession>
<accession>Q9LVJ8</accession>
<protein>
    <recommendedName>
        <fullName>Polyadenylate-binding protein-interacting protein 4</fullName>
        <shortName>PABP-interacting protein 4</shortName>
        <shortName>Poly(A)-binding protein-interacting protein 4</shortName>
    </recommendedName>
    <alternativeName>
        <fullName>PAM2-containing protein CID4</fullName>
    </alternativeName>
    <alternativeName>
        <fullName>Protein CTC-INTERACTING DOMAIN 4</fullName>
    </alternativeName>
</protein>
<keyword id="KW-0025">Alternative splicing</keyword>
<keyword id="KW-1185">Reference proteome</keyword>
<keyword id="KW-0677">Repeat</keyword>
<reference key="1">
    <citation type="journal article" date="2000" name="DNA Res.">
        <title>Structural analysis of Arabidopsis thaliana chromosome 3. I. Sequence features of the regions of 4,504,864 bp covered by sixty P1 and TAC clones.</title>
        <authorList>
            <person name="Sato S."/>
            <person name="Nakamura Y."/>
            <person name="Kaneko T."/>
            <person name="Katoh T."/>
            <person name="Asamizu E."/>
            <person name="Tabata S."/>
        </authorList>
    </citation>
    <scope>NUCLEOTIDE SEQUENCE [LARGE SCALE GENOMIC DNA]</scope>
    <source>
        <strain>cv. Columbia</strain>
    </source>
</reference>
<reference key="2">
    <citation type="journal article" date="2017" name="Plant J.">
        <title>Araport11: a complete reannotation of the Arabidopsis thaliana reference genome.</title>
        <authorList>
            <person name="Cheng C.Y."/>
            <person name="Krishnakumar V."/>
            <person name="Chan A.P."/>
            <person name="Thibaud-Nissen F."/>
            <person name="Schobel S."/>
            <person name="Town C.D."/>
        </authorList>
    </citation>
    <scope>GENOME REANNOTATION</scope>
    <source>
        <strain>cv. Columbia</strain>
    </source>
</reference>
<reference key="3">
    <citation type="journal article" date="2003" name="Science">
        <title>Empirical analysis of transcriptional activity in the Arabidopsis genome.</title>
        <authorList>
            <person name="Yamada K."/>
            <person name="Lim J."/>
            <person name="Dale J.M."/>
            <person name="Chen H."/>
            <person name="Shinn P."/>
            <person name="Palm C.J."/>
            <person name="Southwick A.M."/>
            <person name="Wu H.C."/>
            <person name="Kim C.J."/>
            <person name="Nguyen M."/>
            <person name="Pham P.K."/>
            <person name="Cheuk R.F."/>
            <person name="Karlin-Newmann G."/>
            <person name="Liu S.X."/>
            <person name="Lam B."/>
            <person name="Sakano H."/>
            <person name="Wu T."/>
            <person name="Yu G."/>
            <person name="Miranda M."/>
            <person name="Quach H.L."/>
            <person name="Tripp M."/>
            <person name="Chang C.H."/>
            <person name="Lee J.M."/>
            <person name="Toriumi M.J."/>
            <person name="Chan M.M."/>
            <person name="Tang C.C."/>
            <person name="Onodera C.S."/>
            <person name="Deng J.M."/>
            <person name="Akiyama K."/>
            <person name="Ansari Y."/>
            <person name="Arakawa T."/>
            <person name="Banh J."/>
            <person name="Banno F."/>
            <person name="Bowser L."/>
            <person name="Brooks S.Y."/>
            <person name="Carninci P."/>
            <person name="Chao Q."/>
            <person name="Choy N."/>
            <person name="Enju A."/>
            <person name="Goldsmith A.D."/>
            <person name="Gurjal M."/>
            <person name="Hansen N.F."/>
            <person name="Hayashizaki Y."/>
            <person name="Johnson-Hopson C."/>
            <person name="Hsuan V.W."/>
            <person name="Iida K."/>
            <person name="Karnes M."/>
            <person name="Khan S."/>
            <person name="Koesema E."/>
            <person name="Ishida J."/>
            <person name="Jiang P.X."/>
            <person name="Jones T."/>
            <person name="Kawai J."/>
            <person name="Kamiya A."/>
            <person name="Meyers C."/>
            <person name="Nakajima M."/>
            <person name="Narusaka M."/>
            <person name="Seki M."/>
            <person name="Sakurai T."/>
            <person name="Satou M."/>
            <person name="Tamse R."/>
            <person name="Vaysberg M."/>
            <person name="Wallender E.K."/>
            <person name="Wong C."/>
            <person name="Yamamura Y."/>
            <person name="Yuan S."/>
            <person name="Shinozaki K."/>
            <person name="Davis R.W."/>
            <person name="Theologis A."/>
            <person name="Ecker J.R."/>
        </authorList>
    </citation>
    <scope>NUCLEOTIDE SEQUENCE [LARGE SCALE MRNA]</scope>
    <source>
        <strain>cv. Columbia</strain>
    </source>
</reference>
<reference key="4">
    <citation type="journal article" date="2005" name="Mol. Genet. Genomics">
        <title>Four distinct classes of proteins as interaction partners of the PABC domain of Arabidopsis thaliana Poly(A)-binding proteins.</title>
        <authorList>
            <person name="Bravo J."/>
            <person name="Aguilar-Henonin L."/>
            <person name="Olmedo G."/>
            <person name="Guzman P."/>
        </authorList>
    </citation>
    <scope>GENE FAMILY</scope>
    <scope>PAM2 MOTIF</scope>
    <scope>TISSUE SPECIFICITY</scope>
</reference>
<gene>
    <name type="primary">CID4</name>
    <name type="ordered locus">At3g14010</name>
    <name type="ORF">MDC16.14</name>
</gene>
<name>CID4_ARATH</name>
<evidence type="ECO:0000255" key="1">
    <source>
        <dbReference type="PROSITE-ProRule" id="PRU01346"/>
    </source>
</evidence>
<evidence type="ECO:0000256" key="2">
    <source>
        <dbReference type="SAM" id="MobiDB-lite"/>
    </source>
</evidence>
<evidence type="ECO:0000269" key="3">
    <source>
    </source>
</evidence>
<evidence type="ECO:0000305" key="4"/>